<feature type="chain" id="PRO_0000353273" description="DNA-directed RNA polymerase subunit beta'">
    <location>
        <begin position="1"/>
        <end position="1397"/>
    </location>
</feature>
<feature type="binding site" evidence="1">
    <location>
        <position position="75"/>
    </location>
    <ligand>
        <name>Zn(2+)</name>
        <dbReference type="ChEBI" id="CHEBI:29105"/>
        <label>1</label>
    </ligand>
</feature>
<feature type="binding site" evidence="1">
    <location>
        <position position="77"/>
    </location>
    <ligand>
        <name>Zn(2+)</name>
        <dbReference type="ChEBI" id="CHEBI:29105"/>
        <label>1</label>
    </ligand>
</feature>
<feature type="binding site" evidence="1">
    <location>
        <position position="90"/>
    </location>
    <ligand>
        <name>Zn(2+)</name>
        <dbReference type="ChEBI" id="CHEBI:29105"/>
        <label>1</label>
    </ligand>
</feature>
<feature type="binding site" evidence="1">
    <location>
        <position position="93"/>
    </location>
    <ligand>
        <name>Zn(2+)</name>
        <dbReference type="ChEBI" id="CHEBI:29105"/>
        <label>1</label>
    </ligand>
</feature>
<feature type="binding site" evidence="1">
    <location>
        <position position="465"/>
    </location>
    <ligand>
        <name>Mg(2+)</name>
        <dbReference type="ChEBI" id="CHEBI:18420"/>
    </ligand>
</feature>
<feature type="binding site" evidence="1">
    <location>
        <position position="467"/>
    </location>
    <ligand>
        <name>Mg(2+)</name>
        <dbReference type="ChEBI" id="CHEBI:18420"/>
    </ligand>
</feature>
<feature type="binding site" evidence="1">
    <location>
        <position position="469"/>
    </location>
    <ligand>
        <name>Mg(2+)</name>
        <dbReference type="ChEBI" id="CHEBI:18420"/>
    </ligand>
</feature>
<feature type="binding site" evidence="1">
    <location>
        <position position="819"/>
    </location>
    <ligand>
        <name>Zn(2+)</name>
        <dbReference type="ChEBI" id="CHEBI:29105"/>
        <label>2</label>
    </ligand>
</feature>
<feature type="binding site" evidence="1">
    <location>
        <position position="893"/>
    </location>
    <ligand>
        <name>Zn(2+)</name>
        <dbReference type="ChEBI" id="CHEBI:29105"/>
        <label>2</label>
    </ligand>
</feature>
<feature type="binding site" evidence="1">
    <location>
        <position position="900"/>
    </location>
    <ligand>
        <name>Zn(2+)</name>
        <dbReference type="ChEBI" id="CHEBI:29105"/>
        <label>2</label>
    </ligand>
</feature>
<feature type="binding site" evidence="1">
    <location>
        <position position="903"/>
    </location>
    <ligand>
        <name>Zn(2+)</name>
        <dbReference type="ChEBI" id="CHEBI:29105"/>
        <label>2</label>
    </ligand>
</feature>
<organism>
    <name type="scientific">Acinetobacter baumannii (strain ACICU)</name>
    <dbReference type="NCBI Taxonomy" id="405416"/>
    <lineage>
        <taxon>Bacteria</taxon>
        <taxon>Pseudomonadati</taxon>
        <taxon>Pseudomonadota</taxon>
        <taxon>Gammaproteobacteria</taxon>
        <taxon>Moraxellales</taxon>
        <taxon>Moraxellaceae</taxon>
        <taxon>Acinetobacter</taxon>
        <taxon>Acinetobacter calcoaceticus/baumannii complex</taxon>
    </lineage>
</organism>
<keyword id="KW-0240">DNA-directed RNA polymerase</keyword>
<keyword id="KW-0460">Magnesium</keyword>
<keyword id="KW-0479">Metal-binding</keyword>
<keyword id="KW-0548">Nucleotidyltransferase</keyword>
<keyword id="KW-0804">Transcription</keyword>
<keyword id="KW-0808">Transferase</keyword>
<keyword id="KW-0862">Zinc</keyword>
<comment type="function">
    <text evidence="1">DNA-dependent RNA polymerase catalyzes the transcription of DNA into RNA using the four ribonucleoside triphosphates as substrates.</text>
</comment>
<comment type="catalytic activity">
    <reaction evidence="1">
        <text>RNA(n) + a ribonucleoside 5'-triphosphate = RNA(n+1) + diphosphate</text>
        <dbReference type="Rhea" id="RHEA:21248"/>
        <dbReference type="Rhea" id="RHEA-COMP:14527"/>
        <dbReference type="Rhea" id="RHEA-COMP:17342"/>
        <dbReference type="ChEBI" id="CHEBI:33019"/>
        <dbReference type="ChEBI" id="CHEBI:61557"/>
        <dbReference type="ChEBI" id="CHEBI:140395"/>
        <dbReference type="EC" id="2.7.7.6"/>
    </reaction>
</comment>
<comment type="cofactor">
    <cofactor evidence="1">
        <name>Mg(2+)</name>
        <dbReference type="ChEBI" id="CHEBI:18420"/>
    </cofactor>
    <text evidence="1">Binds 1 Mg(2+) ion per subunit.</text>
</comment>
<comment type="cofactor">
    <cofactor evidence="1">
        <name>Zn(2+)</name>
        <dbReference type="ChEBI" id="CHEBI:29105"/>
    </cofactor>
    <text evidence="1">Binds 2 Zn(2+) ions per subunit.</text>
</comment>
<comment type="subunit">
    <text evidence="1">The RNAP catalytic core consists of 2 alpha, 1 beta, 1 beta' and 1 omega subunit. When a sigma factor is associated with the core the holoenzyme is formed, which can initiate transcription.</text>
</comment>
<comment type="similarity">
    <text evidence="1">Belongs to the RNA polymerase beta' chain family.</text>
</comment>
<sequence>MKDLLDIMRKKTDSDGHAPVEFDRIRIGLASPEMIKSWSHGEVKKPETINYRTFKPERDGLFCAKIFGPVKDYECLCGKYKRMKYKGVICEKCGVEVTTAKVRRERMGHIELASPVAHIWFLKSLPSRIGLLLDMTLRDIERVLYFESYVVTDPGMTPFEKYQLLNDEEYFTALEEHGDEFVAKMGAEAVQDLLKDIDLEAEISRLREEIPQTTSETKLKKASKRLKLMEAFKDSNNKPEWMVMNVLPVLPPDLRPLVPLEGGRFATSDLNDLYRRVINRNNRLKRLLDLAAPDIIVRNEKRMLQESVDALLDNGRRGRAITGSNKRPLKSLADMIKGKQGRFRQNLLGKRVDYSGRSVITVGPTLRLHQCGLPKKMALELFKPFIFAKLQASGQATTIKAAKKMVERETPEVWDVLASVIRQHPVMLNRAPTLHRLGLQAFEPILIEGKAIRLHPLVCAAFNADFDGDQMAVHVPLTLEAQLEARALMMSTNNILSPANGEPIIVPSQDVVLGLYYITRDAVNAKGEGMVFADTHEVNRALATGQVAIHARVKVRVHQTVINENGEREQQTIIVDTTPGRCLLWEVVPEGLSFDMINLEMTKKNISKLINSCYRKLGLKDTVIFADQLMYLGFRQATRSGVSVGMEDMLIPPTKHTIIDKAETEVREIEQQFEQGFVTAGERYNKVVDIWARTNDQVAKAMMDNLSYTLVKNKQGEDEKQKSFNSIYMMSDSGARGSAAQIRQLAGMRGLMAKPDGSIIETPIKANFREGLTVLQYFISTHGARKGLADTALKTANSGYLTRRLVDVAQDLVITEPDCGTSGGLVMTPFIQGGDVIEPLRDRVLGRVTAEDVRRASDDEVVLPRGTLIDEKIAAQLEEAGVDEVKVRSVIACESTFGVCAKCYGRDLARGHLVNPGESVGVMAAQSIGEPGTQLTMRTFHVGGAASRTSAANSVQVRNKGTVRFHNVKTVQHAKGHLVSVSRSGEIGIADELGRERERYKLPYGASILLKDGELVEAGGIVATWDPHTHPLVTEVAGKARFSQIADGVTATSKTDDATGMTTVEILPVTARPASGKDLRPAIVLDTTDGGEQFYFLPQNTIVTVRDGETIGVGDVIGRVPQESSRTRDITGGLPRVADLFEARKPKEHAILAEVSGIVSFGKETKGKNRLVITPDDGSEIYEELIPKWRQINVFEGEHVNRGETISDGPQNPHDILRLKGEVALTNYIVNEVQDVYRLQGVKINDKHIEVIVRQMLRKVDIIDGGDTSFIKGEQVDYIRVVQENQAVLAQNKFPAKFERQLMGITKASLSTDSFISAASFQETTRVLTEAAVTGKEDDLRGLKENVVVGRLIPAGTGLAYHLERRRQEAEAAEHALHNDFSEVDQAFSQALNSEQF</sequence>
<dbReference type="EC" id="2.7.7.6" evidence="1"/>
<dbReference type="EMBL" id="CP000863">
    <property type="protein sequence ID" value="ACC55616.1"/>
    <property type="molecule type" value="Genomic_DNA"/>
</dbReference>
<dbReference type="RefSeq" id="WP_000653927.1">
    <property type="nucleotide sequence ID" value="NZ_CP031380.1"/>
</dbReference>
<dbReference type="SMR" id="B2I1Z2"/>
<dbReference type="GeneID" id="92892285"/>
<dbReference type="KEGG" id="abc:ACICU_00304"/>
<dbReference type="HOGENOM" id="CLU_000524_3_1_6"/>
<dbReference type="Proteomes" id="UP000008839">
    <property type="component" value="Chromosome"/>
</dbReference>
<dbReference type="GO" id="GO:0000428">
    <property type="term" value="C:DNA-directed RNA polymerase complex"/>
    <property type="evidence" value="ECO:0007669"/>
    <property type="project" value="UniProtKB-KW"/>
</dbReference>
<dbReference type="GO" id="GO:0003677">
    <property type="term" value="F:DNA binding"/>
    <property type="evidence" value="ECO:0007669"/>
    <property type="project" value="UniProtKB-UniRule"/>
</dbReference>
<dbReference type="GO" id="GO:0003899">
    <property type="term" value="F:DNA-directed RNA polymerase activity"/>
    <property type="evidence" value="ECO:0007669"/>
    <property type="project" value="UniProtKB-UniRule"/>
</dbReference>
<dbReference type="GO" id="GO:0000287">
    <property type="term" value="F:magnesium ion binding"/>
    <property type="evidence" value="ECO:0007669"/>
    <property type="project" value="UniProtKB-UniRule"/>
</dbReference>
<dbReference type="GO" id="GO:0008270">
    <property type="term" value="F:zinc ion binding"/>
    <property type="evidence" value="ECO:0007669"/>
    <property type="project" value="UniProtKB-UniRule"/>
</dbReference>
<dbReference type="GO" id="GO:0006351">
    <property type="term" value="P:DNA-templated transcription"/>
    <property type="evidence" value="ECO:0007669"/>
    <property type="project" value="UniProtKB-UniRule"/>
</dbReference>
<dbReference type="CDD" id="cd02655">
    <property type="entry name" value="RNAP_beta'_C"/>
    <property type="match status" value="1"/>
</dbReference>
<dbReference type="CDD" id="cd01609">
    <property type="entry name" value="RNAP_beta'_N"/>
    <property type="match status" value="1"/>
</dbReference>
<dbReference type="FunFam" id="1.10.132.30:FF:000003">
    <property type="entry name" value="DNA-directed RNA polymerase subunit beta"/>
    <property type="match status" value="1"/>
</dbReference>
<dbReference type="FunFam" id="1.10.150.390:FF:000002">
    <property type="entry name" value="DNA-directed RNA polymerase subunit beta"/>
    <property type="match status" value="1"/>
</dbReference>
<dbReference type="FunFam" id="4.10.860.120:FF:000001">
    <property type="entry name" value="DNA-directed RNA polymerase subunit beta"/>
    <property type="match status" value="1"/>
</dbReference>
<dbReference type="Gene3D" id="1.10.132.30">
    <property type="match status" value="1"/>
</dbReference>
<dbReference type="Gene3D" id="1.10.150.390">
    <property type="match status" value="1"/>
</dbReference>
<dbReference type="Gene3D" id="1.10.1790.20">
    <property type="match status" value="1"/>
</dbReference>
<dbReference type="Gene3D" id="1.10.40.90">
    <property type="match status" value="1"/>
</dbReference>
<dbReference type="Gene3D" id="2.40.40.20">
    <property type="match status" value="1"/>
</dbReference>
<dbReference type="Gene3D" id="2.40.50.100">
    <property type="match status" value="3"/>
</dbReference>
<dbReference type="Gene3D" id="4.10.860.120">
    <property type="entry name" value="RNA polymerase II, clamp domain"/>
    <property type="match status" value="1"/>
</dbReference>
<dbReference type="Gene3D" id="1.10.274.100">
    <property type="entry name" value="RNA polymerase Rpb1, domain 3"/>
    <property type="match status" value="1"/>
</dbReference>
<dbReference type="HAMAP" id="MF_01322">
    <property type="entry name" value="RNApol_bact_RpoC"/>
    <property type="match status" value="1"/>
</dbReference>
<dbReference type="InterPro" id="IPR045867">
    <property type="entry name" value="DNA-dir_RpoC_beta_prime"/>
</dbReference>
<dbReference type="InterPro" id="IPR012754">
    <property type="entry name" value="DNA-dir_RpoC_beta_prime_bact"/>
</dbReference>
<dbReference type="InterPro" id="IPR000722">
    <property type="entry name" value="RNA_pol_asu"/>
</dbReference>
<dbReference type="InterPro" id="IPR006592">
    <property type="entry name" value="RNA_pol_N"/>
</dbReference>
<dbReference type="InterPro" id="IPR007080">
    <property type="entry name" value="RNA_pol_Rpb1_1"/>
</dbReference>
<dbReference type="InterPro" id="IPR007066">
    <property type="entry name" value="RNA_pol_Rpb1_3"/>
</dbReference>
<dbReference type="InterPro" id="IPR042102">
    <property type="entry name" value="RNA_pol_Rpb1_3_sf"/>
</dbReference>
<dbReference type="InterPro" id="IPR007083">
    <property type="entry name" value="RNA_pol_Rpb1_4"/>
</dbReference>
<dbReference type="InterPro" id="IPR007081">
    <property type="entry name" value="RNA_pol_Rpb1_5"/>
</dbReference>
<dbReference type="InterPro" id="IPR044893">
    <property type="entry name" value="RNA_pol_Rpb1_clamp_domain"/>
</dbReference>
<dbReference type="InterPro" id="IPR038120">
    <property type="entry name" value="Rpb1_funnel_sf"/>
</dbReference>
<dbReference type="NCBIfam" id="TIGR02386">
    <property type="entry name" value="rpoC_TIGR"/>
    <property type="match status" value="1"/>
</dbReference>
<dbReference type="PANTHER" id="PTHR19376">
    <property type="entry name" value="DNA-DIRECTED RNA POLYMERASE"/>
    <property type="match status" value="1"/>
</dbReference>
<dbReference type="PANTHER" id="PTHR19376:SF54">
    <property type="entry name" value="DNA-DIRECTED RNA POLYMERASE SUBUNIT BETA"/>
    <property type="match status" value="1"/>
</dbReference>
<dbReference type="Pfam" id="PF04997">
    <property type="entry name" value="RNA_pol_Rpb1_1"/>
    <property type="match status" value="1"/>
</dbReference>
<dbReference type="Pfam" id="PF00623">
    <property type="entry name" value="RNA_pol_Rpb1_2"/>
    <property type="match status" value="2"/>
</dbReference>
<dbReference type="Pfam" id="PF04983">
    <property type="entry name" value="RNA_pol_Rpb1_3"/>
    <property type="match status" value="1"/>
</dbReference>
<dbReference type="Pfam" id="PF05000">
    <property type="entry name" value="RNA_pol_Rpb1_4"/>
    <property type="match status" value="1"/>
</dbReference>
<dbReference type="Pfam" id="PF04998">
    <property type="entry name" value="RNA_pol_Rpb1_5"/>
    <property type="match status" value="1"/>
</dbReference>
<dbReference type="SMART" id="SM00663">
    <property type="entry name" value="RPOLA_N"/>
    <property type="match status" value="1"/>
</dbReference>
<dbReference type="SUPFAM" id="SSF64484">
    <property type="entry name" value="beta and beta-prime subunits of DNA dependent RNA-polymerase"/>
    <property type="match status" value="1"/>
</dbReference>
<protein>
    <recommendedName>
        <fullName evidence="1">DNA-directed RNA polymerase subunit beta'</fullName>
        <shortName evidence="1">RNAP subunit beta'</shortName>
        <ecNumber evidence="1">2.7.7.6</ecNumber>
    </recommendedName>
    <alternativeName>
        <fullName evidence="1">RNA polymerase subunit beta'</fullName>
    </alternativeName>
    <alternativeName>
        <fullName evidence="1">Transcriptase subunit beta'</fullName>
    </alternativeName>
</protein>
<name>RPOC_ACIBC</name>
<gene>
    <name evidence="1" type="primary">rpoC</name>
    <name type="ordered locus">ACICU_00304</name>
</gene>
<evidence type="ECO:0000255" key="1">
    <source>
        <dbReference type="HAMAP-Rule" id="MF_01322"/>
    </source>
</evidence>
<reference key="1">
    <citation type="journal article" date="2008" name="Antimicrob. Agents Chemother.">
        <title>Whole-genome pyrosequencing of an epidemic multidrug-resistant Acinetobacter baumannii strain belonging to the European clone II group.</title>
        <authorList>
            <person name="Iacono M."/>
            <person name="Villa L."/>
            <person name="Fortini D."/>
            <person name="Bordoni R."/>
            <person name="Imperi F."/>
            <person name="Bonnal R.J."/>
            <person name="Sicheritz-Ponten T."/>
            <person name="De Bellis G."/>
            <person name="Visca P."/>
            <person name="Cassone A."/>
            <person name="Carattoli A."/>
        </authorList>
    </citation>
    <scope>NUCLEOTIDE SEQUENCE [LARGE SCALE GENOMIC DNA]</scope>
    <source>
        <strain>ACICU</strain>
    </source>
</reference>
<proteinExistence type="inferred from homology"/>
<accession>B2I1Z2</accession>